<organism>
    <name type="scientific">Xanthomonas euvesicatoria pv. vesicatoria (strain 85-10)</name>
    <name type="common">Xanthomonas campestris pv. vesicatoria</name>
    <dbReference type="NCBI Taxonomy" id="316273"/>
    <lineage>
        <taxon>Bacteria</taxon>
        <taxon>Pseudomonadati</taxon>
        <taxon>Pseudomonadota</taxon>
        <taxon>Gammaproteobacteria</taxon>
        <taxon>Lysobacterales</taxon>
        <taxon>Lysobacteraceae</taxon>
        <taxon>Xanthomonas</taxon>
    </lineage>
</organism>
<gene>
    <name evidence="1" type="primary">rpsK</name>
    <name type="ordered locus">XCV1021</name>
</gene>
<keyword id="KW-0687">Ribonucleoprotein</keyword>
<keyword id="KW-0689">Ribosomal protein</keyword>
<keyword id="KW-0694">RNA-binding</keyword>
<keyword id="KW-0699">rRNA-binding</keyword>
<accession>Q3BWW1</accession>
<dbReference type="EMBL" id="AM039952">
    <property type="protein sequence ID" value="CAJ22652.1"/>
    <property type="molecule type" value="Genomic_DNA"/>
</dbReference>
<dbReference type="RefSeq" id="WP_003486671.1">
    <property type="nucleotide sequence ID" value="NZ_CP017190.1"/>
</dbReference>
<dbReference type="SMR" id="Q3BWW1"/>
<dbReference type="STRING" id="456327.BJD11_17630"/>
<dbReference type="GeneID" id="97509358"/>
<dbReference type="KEGG" id="xcv:XCV1021"/>
<dbReference type="eggNOG" id="COG0100">
    <property type="taxonomic scope" value="Bacteria"/>
</dbReference>
<dbReference type="HOGENOM" id="CLU_072439_5_0_6"/>
<dbReference type="Proteomes" id="UP000007069">
    <property type="component" value="Chromosome"/>
</dbReference>
<dbReference type="GO" id="GO:1990904">
    <property type="term" value="C:ribonucleoprotein complex"/>
    <property type="evidence" value="ECO:0007669"/>
    <property type="project" value="UniProtKB-KW"/>
</dbReference>
<dbReference type="GO" id="GO:0005840">
    <property type="term" value="C:ribosome"/>
    <property type="evidence" value="ECO:0007669"/>
    <property type="project" value="UniProtKB-KW"/>
</dbReference>
<dbReference type="GO" id="GO:0019843">
    <property type="term" value="F:rRNA binding"/>
    <property type="evidence" value="ECO:0007669"/>
    <property type="project" value="UniProtKB-UniRule"/>
</dbReference>
<dbReference type="GO" id="GO:0003735">
    <property type="term" value="F:structural constituent of ribosome"/>
    <property type="evidence" value="ECO:0007669"/>
    <property type="project" value="InterPro"/>
</dbReference>
<dbReference type="GO" id="GO:0006412">
    <property type="term" value="P:translation"/>
    <property type="evidence" value="ECO:0007669"/>
    <property type="project" value="UniProtKB-UniRule"/>
</dbReference>
<dbReference type="FunFam" id="3.30.420.80:FF:000001">
    <property type="entry name" value="30S ribosomal protein S11"/>
    <property type="match status" value="1"/>
</dbReference>
<dbReference type="Gene3D" id="3.30.420.80">
    <property type="entry name" value="Ribosomal protein S11"/>
    <property type="match status" value="1"/>
</dbReference>
<dbReference type="HAMAP" id="MF_01310">
    <property type="entry name" value="Ribosomal_uS11"/>
    <property type="match status" value="1"/>
</dbReference>
<dbReference type="InterPro" id="IPR001971">
    <property type="entry name" value="Ribosomal_uS11"/>
</dbReference>
<dbReference type="InterPro" id="IPR019981">
    <property type="entry name" value="Ribosomal_uS11_bac-type"/>
</dbReference>
<dbReference type="InterPro" id="IPR018102">
    <property type="entry name" value="Ribosomal_uS11_CS"/>
</dbReference>
<dbReference type="InterPro" id="IPR036967">
    <property type="entry name" value="Ribosomal_uS11_sf"/>
</dbReference>
<dbReference type="NCBIfam" id="NF003698">
    <property type="entry name" value="PRK05309.1"/>
    <property type="match status" value="1"/>
</dbReference>
<dbReference type="NCBIfam" id="TIGR03632">
    <property type="entry name" value="uS11_bact"/>
    <property type="match status" value="1"/>
</dbReference>
<dbReference type="PANTHER" id="PTHR11759">
    <property type="entry name" value="40S RIBOSOMAL PROTEIN S14/30S RIBOSOMAL PROTEIN S11"/>
    <property type="match status" value="1"/>
</dbReference>
<dbReference type="Pfam" id="PF00411">
    <property type="entry name" value="Ribosomal_S11"/>
    <property type="match status" value="1"/>
</dbReference>
<dbReference type="PIRSF" id="PIRSF002131">
    <property type="entry name" value="Ribosomal_S11"/>
    <property type="match status" value="1"/>
</dbReference>
<dbReference type="SUPFAM" id="SSF53137">
    <property type="entry name" value="Translational machinery components"/>
    <property type="match status" value="1"/>
</dbReference>
<dbReference type="PROSITE" id="PS00054">
    <property type="entry name" value="RIBOSOMAL_S11"/>
    <property type="match status" value="1"/>
</dbReference>
<evidence type="ECO:0000255" key="1">
    <source>
        <dbReference type="HAMAP-Rule" id="MF_01310"/>
    </source>
</evidence>
<evidence type="ECO:0000305" key="2"/>
<protein>
    <recommendedName>
        <fullName evidence="1">Small ribosomal subunit protein uS11</fullName>
    </recommendedName>
    <alternativeName>
        <fullName evidence="2">30S ribosomal protein S11</fullName>
    </alternativeName>
</protein>
<feature type="chain" id="PRO_0000230443" description="Small ribosomal subunit protein uS11">
    <location>
        <begin position="1"/>
        <end position="130"/>
    </location>
</feature>
<name>RS11_XANE5</name>
<proteinExistence type="inferred from homology"/>
<reference key="1">
    <citation type="journal article" date="2005" name="J. Bacteriol.">
        <title>Insights into genome plasticity and pathogenicity of the plant pathogenic Bacterium Xanthomonas campestris pv. vesicatoria revealed by the complete genome sequence.</title>
        <authorList>
            <person name="Thieme F."/>
            <person name="Koebnik R."/>
            <person name="Bekel T."/>
            <person name="Berger C."/>
            <person name="Boch J."/>
            <person name="Buettner D."/>
            <person name="Caldana C."/>
            <person name="Gaigalat L."/>
            <person name="Goesmann A."/>
            <person name="Kay S."/>
            <person name="Kirchner O."/>
            <person name="Lanz C."/>
            <person name="Linke B."/>
            <person name="McHardy A.C."/>
            <person name="Meyer F."/>
            <person name="Mittenhuber G."/>
            <person name="Nies D.H."/>
            <person name="Niesbach-Kloesgen U."/>
            <person name="Patschkowski T."/>
            <person name="Rueckert C."/>
            <person name="Rupp O."/>
            <person name="Schneiker S."/>
            <person name="Schuster S.C."/>
            <person name="Vorhoelter F.J."/>
            <person name="Weber E."/>
            <person name="Puehler A."/>
            <person name="Bonas U."/>
            <person name="Bartels D."/>
            <person name="Kaiser O."/>
        </authorList>
    </citation>
    <scope>NUCLEOTIDE SEQUENCE [LARGE SCALE GENOMIC DNA]</scope>
    <source>
        <strain>85-10</strain>
    </source>
</reference>
<sequence length="130" mass="13915">MAKPAEKKTKKKIKRVITDGVAHVHASFNNTIVTITDRQGNALSWATSGGAGFRGSRKSTPFAAQVAAEKAGRAALDYGVKSLEVRIKGPGPGRESAVRSLNNVGYKITNIIDVTPIPHNGCRPPKKRRV</sequence>
<comment type="function">
    <text evidence="1">Located on the platform of the 30S subunit, it bridges several disparate RNA helices of the 16S rRNA. Forms part of the Shine-Dalgarno cleft in the 70S ribosome.</text>
</comment>
<comment type="subunit">
    <text evidence="1">Part of the 30S ribosomal subunit. Interacts with proteins S7 and S18. Binds to IF-3.</text>
</comment>
<comment type="similarity">
    <text evidence="1">Belongs to the universal ribosomal protein uS11 family.</text>
</comment>